<feature type="chain" id="PRO_0000065679" description="Tyrosyl-DNA phosphodiesterase 2">
    <location>
        <begin position="1"/>
        <end position="370"/>
    </location>
</feature>
<feature type="region of interest" description="Disordered" evidence="2">
    <location>
        <begin position="1"/>
        <end position="32"/>
    </location>
</feature>
<feature type="region of interest" description="Interaction with 5' end of substrate DNA" evidence="5 8">
    <location>
        <begin position="130"/>
        <end position="134"/>
    </location>
</feature>
<feature type="region of interest" description="Interaction with 5' end of substrate DNA" evidence="5 7 8">
    <location>
        <begin position="236"/>
        <end position="241"/>
    </location>
</feature>
<feature type="region of interest" description="Interaction with 5' end of substrate DNA" evidence="5 7 8">
    <location>
        <begin position="274"/>
        <end position="276"/>
    </location>
</feature>
<feature type="region of interest" description="Interaction with 5' end of substrate DNA" evidence="5 7 8">
    <location>
        <begin position="315"/>
        <end position="321"/>
    </location>
</feature>
<feature type="compositionally biased region" description="Low complexity" evidence="2">
    <location>
        <begin position="9"/>
        <end position="26"/>
    </location>
</feature>
<feature type="active site" description="Proton donor/acceptor" evidence="12 13">
    <location>
        <position position="272"/>
    </location>
</feature>
<feature type="binding site" evidence="5 9 14 17 27">
    <location>
        <position position="132"/>
    </location>
    <ligand>
        <name>Mg(2+)</name>
        <dbReference type="ChEBI" id="CHEBI:18420"/>
    </ligand>
</feature>
<feature type="binding site" evidence="5 7 9 14 16 17 18 19 24 27">
    <location>
        <position position="162"/>
    </location>
    <ligand>
        <name>Mg(2+)</name>
        <dbReference type="ChEBI" id="CHEBI:18420"/>
    </ligand>
</feature>
<feature type="site" description="Interaction with 5' end of substrate DNA" evidence="5 8">
    <location>
        <position position="188"/>
    </location>
</feature>
<feature type="site" description="Interaction with 5' end of substrate DNA" evidence="5 7 8">
    <location>
        <position position="307"/>
    </location>
</feature>
<feature type="site" description="Interaction with 5' end of substrate DNA" evidence="5">
    <location>
        <position position="325"/>
    </location>
</feature>
<feature type="site" description="Interaction with 5' end of substrate DNA" evidence="5 7 8">
    <location>
        <position position="359"/>
    </location>
</feature>
<feature type="modified residue" description="N-acetylmethionine" evidence="1">
    <location>
        <position position="1"/>
    </location>
</feature>
<feature type="modified residue" description="Phosphothreonine; by ACVR1B" evidence="1">
    <location>
        <position position="99"/>
    </location>
</feature>
<feature type="cross-link" description="Glycyl lysine isopeptide (Lys-Gly) (interchain with G-Cter in SUMO2)" evidence="1">
    <location>
        <position position="34"/>
    </location>
</feature>
<feature type="mutagenesis site" description="Loss of magnesium binding." evidence="8">
    <original>D</original>
    <variation>N</variation>
    <location>
        <position position="358"/>
    </location>
</feature>
<feature type="turn" evidence="29">
    <location>
        <begin position="119"/>
        <end position="122"/>
    </location>
</feature>
<feature type="strand" evidence="29">
    <location>
        <begin position="123"/>
        <end position="130"/>
    </location>
</feature>
<feature type="helix" evidence="29">
    <location>
        <begin position="139"/>
        <end position="153"/>
    </location>
</feature>
<feature type="strand" evidence="29">
    <location>
        <begin position="156"/>
        <end position="163"/>
    </location>
</feature>
<feature type="helix" evidence="29">
    <location>
        <begin position="165"/>
        <end position="174"/>
    </location>
</feature>
<feature type="turn" evidence="30">
    <location>
        <begin position="175"/>
        <end position="177"/>
    </location>
</feature>
<feature type="strand" evidence="29">
    <location>
        <begin position="178"/>
        <end position="183"/>
    </location>
</feature>
<feature type="strand" evidence="29">
    <location>
        <begin position="185"/>
        <end position="195"/>
    </location>
</feature>
<feature type="turn" evidence="29">
    <location>
        <begin position="196"/>
        <end position="198"/>
    </location>
</feature>
<feature type="strand" evidence="29">
    <location>
        <begin position="199"/>
        <end position="208"/>
    </location>
</feature>
<feature type="strand" evidence="29">
    <location>
        <begin position="217"/>
        <end position="225"/>
    </location>
</feature>
<feature type="strand" evidence="29">
    <location>
        <begin position="228"/>
        <end position="236"/>
    </location>
</feature>
<feature type="helix" evidence="29">
    <location>
        <begin position="241"/>
        <end position="243"/>
    </location>
</feature>
<feature type="helix" evidence="29">
    <location>
        <begin position="244"/>
        <end position="260"/>
    </location>
</feature>
<feature type="strand" evidence="29">
    <location>
        <begin position="265"/>
        <end position="272"/>
    </location>
</feature>
<feature type="helix" evidence="29">
    <location>
        <begin position="277"/>
        <end position="282"/>
    </location>
</feature>
<feature type="strand" evidence="29">
    <location>
        <begin position="290"/>
        <end position="292"/>
    </location>
</feature>
<feature type="helix" evidence="29">
    <location>
        <begin position="293"/>
        <end position="296"/>
    </location>
</feature>
<feature type="helix" evidence="29">
    <location>
        <begin position="301"/>
        <end position="303"/>
    </location>
</feature>
<feature type="strand" evidence="29">
    <location>
        <begin position="306"/>
        <end position="308"/>
    </location>
</feature>
<feature type="turn" evidence="29">
    <location>
        <begin position="309"/>
        <end position="311"/>
    </location>
</feature>
<feature type="strand" evidence="29">
    <location>
        <begin position="326"/>
        <end position="331"/>
    </location>
</feature>
<feature type="strand" evidence="28">
    <location>
        <begin position="333"/>
        <end position="335"/>
    </location>
</feature>
<feature type="strand" evidence="29">
    <location>
        <begin position="336"/>
        <end position="345"/>
    </location>
</feature>
<feature type="strand" evidence="29">
    <location>
        <begin position="361"/>
        <end position="368"/>
    </location>
</feature>
<accession>Q9JJX7</accession>
<accession>A2RTH9</accession>
<reference key="1">
    <citation type="journal article" date="2000" name="J. Biol. Chem.">
        <title>TTRAP, a novel protein that associates with CD40, tumor necrosis factor (TNF) receptor-75 and TNF receptor-associated factors (TRAFs), and that inhibits nuclear factor-kappa B activation.</title>
        <authorList>
            <person name="Pype S."/>
            <person name="Declercq W."/>
            <person name="Ibrahimi A."/>
            <person name="Michiels C."/>
            <person name="Van Rietschoten J.G.I."/>
            <person name="Dewulf N."/>
            <person name="de Boer M."/>
            <person name="Vandenabeele P."/>
            <person name="Huylebroeck D."/>
            <person name="Remacle J.E."/>
        </authorList>
    </citation>
    <scope>NUCLEOTIDE SEQUENCE [MRNA]</scope>
    <scope>TISSUE SPECIFICITY</scope>
</reference>
<reference key="2">
    <citation type="journal article" date="2009" name="PLoS Biol.">
        <title>Lineage-specific biology revealed by a finished genome assembly of the mouse.</title>
        <authorList>
            <person name="Church D.M."/>
            <person name="Goodstadt L."/>
            <person name="Hillier L.W."/>
            <person name="Zody M.C."/>
            <person name="Goldstein S."/>
            <person name="She X."/>
            <person name="Bult C.J."/>
            <person name="Agarwala R."/>
            <person name="Cherry J.L."/>
            <person name="DiCuccio M."/>
            <person name="Hlavina W."/>
            <person name="Kapustin Y."/>
            <person name="Meric P."/>
            <person name="Maglott D."/>
            <person name="Birtle Z."/>
            <person name="Marques A.C."/>
            <person name="Graves T."/>
            <person name="Zhou S."/>
            <person name="Teague B."/>
            <person name="Potamousis K."/>
            <person name="Churas C."/>
            <person name="Place M."/>
            <person name="Herschleb J."/>
            <person name="Runnheim R."/>
            <person name="Forrest D."/>
            <person name="Amos-Landgraf J."/>
            <person name="Schwartz D.C."/>
            <person name="Cheng Z."/>
            <person name="Lindblad-Toh K."/>
            <person name="Eichler E.E."/>
            <person name="Ponting C.P."/>
        </authorList>
    </citation>
    <scope>NUCLEOTIDE SEQUENCE [LARGE SCALE GENOMIC DNA]</scope>
    <source>
        <strain>C57BL/6J</strain>
    </source>
</reference>
<reference key="3">
    <citation type="submission" date="2005-09" db="EMBL/GenBank/DDBJ databases">
        <authorList>
            <person name="Mural R.J."/>
            <person name="Adams M.D."/>
            <person name="Myers E.W."/>
            <person name="Smith H.O."/>
            <person name="Venter J.C."/>
        </authorList>
    </citation>
    <scope>NUCLEOTIDE SEQUENCE [LARGE SCALE GENOMIC DNA]</scope>
</reference>
<reference key="4">
    <citation type="journal article" date="2004" name="Genome Res.">
        <title>The status, quality, and expansion of the NIH full-length cDNA project: the Mammalian Gene Collection (MGC).</title>
        <authorList>
            <consortium name="The MGC Project Team"/>
        </authorList>
    </citation>
    <scope>NUCLEOTIDE SEQUENCE [LARGE SCALE MRNA]</scope>
    <source>
        <tissue>Brain</tissue>
    </source>
</reference>
<reference key="5">
    <citation type="journal article" date="2012" name="Nucleic Acids Res.">
        <title>TDP2 promotes repair of topoisomerase I-mediated DNA damage in the absence of TDP1.</title>
        <authorList>
            <person name="Zeng Z."/>
            <person name="Sharma A."/>
            <person name="Ju L."/>
            <person name="Murai J."/>
            <person name="Umans L."/>
            <person name="Vermeire L."/>
            <person name="Pommier Y."/>
            <person name="Takeda S."/>
            <person name="Huylebroeck D."/>
            <person name="Caldecott K.W."/>
            <person name="El-Khamisy S.F."/>
        </authorList>
    </citation>
    <scope>FUNCTION</scope>
</reference>
<reference key="6">
    <citation type="journal article" date="2014" name="Nat. Genet.">
        <title>TDP2 protects transcription from abortive topoisomerase activity and is required for normal neural function.</title>
        <authorList>
            <person name="Gomez-Herreros F."/>
            <person name="Schuurs-Hoeijmakers J.H."/>
            <person name="McCormack M."/>
            <person name="Greally M.T."/>
            <person name="Rulten S."/>
            <person name="Romero-Granados R."/>
            <person name="Counihan T.J."/>
            <person name="Chaila E."/>
            <person name="Conroy J."/>
            <person name="Ennis S."/>
            <person name="Delanty N."/>
            <person name="Cortes-Ledesma F."/>
            <person name="de Brouwer A.P."/>
            <person name="Cavalleri G.L."/>
            <person name="El-Khamisy S.F."/>
            <person name="de Vries B.B."/>
            <person name="Caldecott K.W."/>
        </authorList>
    </citation>
    <scope>TISSUE SPECIFICITY</scope>
</reference>
<reference evidence="14 15 16 17" key="7">
    <citation type="journal article" date="2012" name="Nat. Struct. Mol. Biol.">
        <title>Mechanism of repair of 5'-topoisomerase II-DNA adducts by mammalian tyrosyl-DNA phosphodiesterase 2.</title>
        <authorList>
            <person name="Schellenberg M.J."/>
            <person name="Appel C.D."/>
            <person name="Adhikari S."/>
            <person name="Robertson P.D."/>
            <person name="Ramsden D.A."/>
            <person name="Williams R.S."/>
        </authorList>
    </citation>
    <scope>X-RAY CRYSTALLOGRAPHY (1.50 ANGSTROMS) OF 118-370 IN COMPLEXES WITH DNA; AMP AND MAGNESIUM</scope>
    <scope>CATALYTIC ACTIVITY</scope>
    <scope>FUNCTION</scope>
    <scope>COFACTOR</scope>
</reference>
<reference evidence="18" key="8">
    <citation type="journal article" date="2014" name="J. Biol. Chem.">
        <title>Proteolytic degradation of topoisomerase II (Top2) enables the processing of Top2DNA and Top2RNA covalent complexes by tyrosyl-DNA-phosphodiesterase 2 (TDP2).</title>
        <authorList>
            <person name="Gao R."/>
            <person name="Schellenberg M.J."/>
            <person name="Huang S.Y."/>
            <person name="Abdelmalak M."/>
            <person name="Marchand C."/>
            <person name="Nitiss K.C."/>
            <person name="Nitiss J.L."/>
            <person name="Williams R.S."/>
            <person name="Pommier Y."/>
        </authorList>
    </citation>
    <scope>X-RAY CRYSTALLOGRAPHY (1.60 ANGSTROMS) OF 118-370 IN COMPLEX WITH DNA AND MAGNESIUM</scope>
    <scope>FUNCTION</scope>
    <scope>COFACTOR</scope>
    <scope>CATALYTIC ACTIVITY</scope>
</reference>
<reference evidence="26 27" key="9">
    <citation type="journal article" date="2016" name="Biochem. J.">
        <title>Mode of action of DNA-competitive small molecule inhibitors of tyrosyl DNA phosphodiesterase 2.</title>
        <authorList>
            <person name="Hornyak P."/>
            <person name="Askwith T."/>
            <person name="Walker S."/>
            <person name="Komulainen E."/>
            <person name="Paradowski M."/>
            <person name="Pennicott L.E."/>
            <person name="Bartlett E.J."/>
            <person name="Brissett N.C."/>
            <person name="Raoof A."/>
            <person name="Watson M."/>
            <person name="Jordan A.M."/>
            <person name="Ogilvie D.J."/>
            <person name="Ward S.E."/>
            <person name="Atack J.R."/>
            <person name="Pearl L.H."/>
            <person name="Caldecott K.W."/>
            <person name="Oliver A.W."/>
        </authorList>
    </citation>
    <scope>X-RAY CRYSTALLOGRAPHY (1.70 ANGSTROMS) OF 118-370 IN COMPLEXES WITH MAGNESIUM AND MANGANESE</scope>
    <scope>CATALYTIC ACTIVITY</scope>
    <scope>FUNCTION</scope>
</reference>
<reference evidence="19 20 21 22 23 24 25" key="10">
    <citation type="journal article" date="2016" name="Nucleic Acids Res.">
        <title>Reversal of DNA damage induced Topoisomerase 2 DNA-protein crosslinks by Tdp2.</title>
        <authorList>
            <person name="Schellenberg M.J."/>
            <person name="Perera L."/>
            <person name="Strom C.N."/>
            <person name="Waters C.A."/>
            <person name="Monian B."/>
            <person name="Appel C.D."/>
            <person name="Vilas C.K."/>
            <person name="Williams J.G."/>
            <person name="Ramsden D.A."/>
            <person name="Williams R.S."/>
        </authorList>
    </citation>
    <scope>X-RAY CRYSTALLOGRAPHY (1.43 ANGSTROMS) OF 118-370 IN COMPLEXES WITH DNA; MAGNESIUM AND MANGANESE</scope>
    <scope>FUNCTION</scope>
    <scope>CATALYTIC ACTIVITY</scope>
    <scope>COFACTOR</scope>
    <scope>MUTAGENESIS OF ASP-358</scope>
</reference>
<comment type="function">
    <text evidence="1 4 5 7 8 9">DNA repair enzyme that can remove a variety of covalent adducts from DNA through hydrolysis of a 5'-phosphodiester bond, giving rise to DNA with a free 5' phosphate. Catalyzes the hydrolysis of dead-end complexes between DNA and the topoisomerase 2 (TOP2) active site tyrosine residue. The 5'-tyrosyl DNA phosphodiesterase activity can enable the repair of TOP2-induced DNA double-strand breaks/DSBs without the need for nuclease activity, creating a 'clean' DSB with 5'-phosphate termini that are ready for ligation (PubMed:23104055, PubMed:24808172, PubMed:27060144, PubMed:27099339). Thereby, protects the transcription of many genes involved in neurological development and maintenance from the abortive activity of TOP2 (PubMed:22740648). Hydrolyzes 5'-phosphoglycolates on protruding 5' ends on DSBs due to DNA damage by radiation and free radicals. Has preference for single-stranded DNA or duplex DNA with a 4 base pair overhang as substrate. Also has 3'-tyrosyl DNA phosphodiesterase activity, but less efficiently and much slower than TDP1. Constitutes the major if not only 5'-tyrosyl-DNA phosphodiesterase in cells. Also acts as an adapter by participating in the specific activation of MAP3K7/TAK1 in response to TGF-beta: associates with components of the TGF-beta receptor-TRAF6-TAK1 signaling module and promotes their ubiquitination dependent complex formation. Involved in non-canonical TGF-beta induced signaling routes. May also act as a negative regulator of ETS1 and may inhibit NF-kappa-B activation. Acts as a regulator of ribosome biogenesis following stress (By similarity).</text>
</comment>
<comment type="cofactor">
    <cofactor evidence="5 7 8 9">
        <name>Mg(2+)</name>
        <dbReference type="ChEBI" id="CHEBI:18420"/>
    </cofactor>
    <cofactor evidence="5 8">
        <name>Mn(2+)</name>
        <dbReference type="ChEBI" id="CHEBI:29035"/>
    </cofactor>
    <text evidence="5 7 8 9">Binds 1 magnesium or manganese ion per subunit.</text>
</comment>
<comment type="subunit">
    <text evidence="1">Interacts with TRAF2, TRAF3, TRAF5, TRAF6, TNFRSF8/CD30, TNFRSF5/CD40, TNFRSF1B/TNF-R75, ETS1, ETS2, FLI1, SMAD3 and ACVR1B/ALK4.</text>
</comment>
<comment type="subcellular location">
    <subcellularLocation>
        <location evidence="1">Nucleus</location>
    </subcellularLocation>
    <subcellularLocation>
        <location evidence="1">Nucleus</location>
        <location evidence="1">PML body</location>
    </subcellularLocation>
    <subcellularLocation>
        <location evidence="1">Nucleus</location>
        <location evidence="1">Nucleolus</location>
    </subcellularLocation>
    <subcellularLocation>
        <location evidence="1">Cytoplasm</location>
    </subcellularLocation>
    <text evidence="1">Localizes to nucleolar cavities following stress; localization to nucleolus is dependent on PML protein.</text>
</comment>
<comment type="tissue specificity">
    <text evidence="3 6">Widely expressed (PubMed:10764746). Expressed in whole brain, cerebellum, quiescent cortical astrocytes and cerebellar granule neurons (PubMed:24658003).</text>
</comment>
<comment type="PTM">
    <text evidence="1">Ubiquitinated by TRAF6.</text>
</comment>
<comment type="miscellaneous">
    <text evidence="11">Can partially complement the absence of Tdp1 due to its weak 3'-tyrosyl DNA phosphodiesterase activity.</text>
</comment>
<comment type="similarity">
    <text evidence="10">Belongs to the CCR4/nocturin family.</text>
</comment>
<keyword id="KW-0002">3D-structure</keyword>
<keyword id="KW-0007">Acetylation</keyword>
<keyword id="KW-0963">Cytoplasm</keyword>
<keyword id="KW-0227">DNA damage</keyword>
<keyword id="KW-0234">DNA repair</keyword>
<keyword id="KW-0378">Hydrolase</keyword>
<keyword id="KW-1017">Isopeptide bond</keyword>
<keyword id="KW-0460">Magnesium</keyword>
<keyword id="KW-0479">Metal-binding</keyword>
<keyword id="KW-0540">Nuclease</keyword>
<keyword id="KW-0539">Nucleus</keyword>
<keyword id="KW-0597">Phosphoprotein</keyword>
<keyword id="KW-1185">Reference proteome</keyword>
<keyword id="KW-0832">Ubl conjugation</keyword>
<protein>
    <recommendedName>
        <fullName>Tyrosyl-DNA phosphodiesterase 2</fullName>
        <shortName>Tyr-DNA phosphodiesterase 2</shortName>
        <ecNumber evidence="5 7 8 9">3.1.4.-</ecNumber>
    </recommendedName>
    <alternativeName>
        <fullName>5'-tyrosyl-DNA phosphodiesterase</fullName>
        <shortName>5'-Tyr-DNA phosphodiesterase</shortName>
    </alternativeName>
    <alternativeName>
        <fullName>TRAF and TNF receptor-associated protein</fullName>
    </alternativeName>
</protein>
<evidence type="ECO:0000250" key="1">
    <source>
        <dbReference type="UniProtKB" id="O95551"/>
    </source>
</evidence>
<evidence type="ECO:0000256" key="2">
    <source>
        <dbReference type="SAM" id="MobiDB-lite"/>
    </source>
</evidence>
<evidence type="ECO:0000269" key="3">
    <source>
    </source>
</evidence>
<evidence type="ECO:0000269" key="4">
    <source>
    </source>
</evidence>
<evidence type="ECO:0000269" key="5">
    <source>
    </source>
</evidence>
<evidence type="ECO:0000269" key="6">
    <source>
    </source>
</evidence>
<evidence type="ECO:0000269" key="7">
    <source>
    </source>
</evidence>
<evidence type="ECO:0000269" key="8">
    <source>
    </source>
</evidence>
<evidence type="ECO:0000269" key="9">
    <source>
    </source>
</evidence>
<evidence type="ECO:0000305" key="10"/>
<evidence type="ECO:0000305" key="11">
    <source>
    </source>
</evidence>
<evidence type="ECO:0000305" key="12">
    <source>
    </source>
</evidence>
<evidence type="ECO:0000305" key="13">
    <source>
    </source>
</evidence>
<evidence type="ECO:0007744" key="14">
    <source>
        <dbReference type="PDB" id="4GYZ"/>
    </source>
</evidence>
<evidence type="ECO:0007744" key="15">
    <source>
        <dbReference type="PDB" id="4GZ0"/>
    </source>
</evidence>
<evidence type="ECO:0007744" key="16">
    <source>
        <dbReference type="PDB" id="4GZ1"/>
    </source>
</evidence>
<evidence type="ECO:0007744" key="17">
    <source>
        <dbReference type="PDB" id="4GZ2"/>
    </source>
</evidence>
<evidence type="ECO:0007744" key="18">
    <source>
        <dbReference type="PDB" id="4PUQ"/>
    </source>
</evidence>
<evidence type="ECO:0007744" key="19">
    <source>
        <dbReference type="PDB" id="5HT2"/>
    </source>
</evidence>
<evidence type="ECO:0007744" key="20">
    <source>
        <dbReference type="PDB" id="5INK"/>
    </source>
</evidence>
<evidence type="ECO:0007744" key="21">
    <source>
        <dbReference type="PDB" id="5INL"/>
    </source>
</evidence>
<evidence type="ECO:0007744" key="22">
    <source>
        <dbReference type="PDB" id="5INM"/>
    </source>
</evidence>
<evidence type="ECO:0007744" key="23">
    <source>
        <dbReference type="PDB" id="5INN"/>
    </source>
</evidence>
<evidence type="ECO:0007744" key="24">
    <source>
        <dbReference type="PDB" id="5INP"/>
    </source>
</evidence>
<evidence type="ECO:0007744" key="25">
    <source>
        <dbReference type="PDB" id="5INQ"/>
    </source>
</evidence>
<evidence type="ECO:0007744" key="26">
    <source>
        <dbReference type="PDB" id="5J3Z"/>
    </source>
</evidence>
<evidence type="ECO:0007744" key="27">
    <source>
        <dbReference type="PDB" id="5J42"/>
    </source>
</evidence>
<evidence type="ECO:0007829" key="28">
    <source>
        <dbReference type="PDB" id="4PUQ"/>
    </source>
</evidence>
<evidence type="ECO:0007829" key="29">
    <source>
        <dbReference type="PDB" id="5HT2"/>
    </source>
</evidence>
<evidence type="ECO:0007829" key="30">
    <source>
        <dbReference type="PDB" id="5TVQ"/>
    </source>
</evidence>
<proteinExistence type="evidence at protein level"/>
<name>TYDP2_MOUSE</name>
<organism>
    <name type="scientific">Mus musculus</name>
    <name type="common">Mouse</name>
    <dbReference type="NCBI Taxonomy" id="10090"/>
    <lineage>
        <taxon>Eukaryota</taxon>
        <taxon>Metazoa</taxon>
        <taxon>Chordata</taxon>
        <taxon>Craniata</taxon>
        <taxon>Vertebrata</taxon>
        <taxon>Euteleostomi</taxon>
        <taxon>Mammalia</taxon>
        <taxon>Eutheria</taxon>
        <taxon>Euarchontoglires</taxon>
        <taxon>Glires</taxon>
        <taxon>Rodentia</taxon>
        <taxon>Myomorpha</taxon>
        <taxon>Muroidea</taxon>
        <taxon>Muridae</taxon>
        <taxon>Murinae</taxon>
        <taxon>Mus</taxon>
        <taxon>Mus</taxon>
    </lineage>
</organism>
<dbReference type="EC" id="3.1.4.-" evidence="5 7 8 9"/>
<dbReference type="EMBL" id="AJ251328">
    <property type="protein sequence ID" value="CAB92971.1"/>
    <property type="molecule type" value="mRNA"/>
</dbReference>
<dbReference type="EMBL" id="AL589699">
    <property type="protein sequence ID" value="CAI26084.1"/>
    <property type="molecule type" value="Genomic_DNA"/>
</dbReference>
<dbReference type="EMBL" id="CH466561">
    <property type="protein sequence ID" value="EDL32475.1"/>
    <property type="molecule type" value="Genomic_DNA"/>
</dbReference>
<dbReference type="EMBL" id="BC132511">
    <property type="protein sequence ID" value="AAI32512.1"/>
    <property type="molecule type" value="mRNA"/>
</dbReference>
<dbReference type="EMBL" id="BC132513">
    <property type="protein sequence ID" value="AAI32514.1"/>
    <property type="molecule type" value="mRNA"/>
</dbReference>
<dbReference type="CCDS" id="CCDS26381.1"/>
<dbReference type="RefSeq" id="NP_062424.1">
    <property type="nucleotide sequence ID" value="NM_019551.2"/>
</dbReference>
<dbReference type="PDB" id="4GYZ">
    <property type="method" value="X-ray"/>
    <property type="resolution" value="2.56 A"/>
    <property type="chains" value="A/B/C/D/E/F/G/H/I=118-370"/>
</dbReference>
<dbReference type="PDB" id="4GZ0">
    <property type="method" value="X-ray"/>
    <property type="resolution" value="2.11 A"/>
    <property type="chains" value="A/B/E/G/I/K=118-370"/>
</dbReference>
<dbReference type="PDB" id="4GZ1">
    <property type="method" value="X-ray"/>
    <property type="resolution" value="1.50 A"/>
    <property type="chains" value="A/B=118-370"/>
</dbReference>
<dbReference type="PDB" id="4GZ2">
    <property type="method" value="X-ray"/>
    <property type="resolution" value="1.85 A"/>
    <property type="chains" value="A/B=118-369"/>
</dbReference>
<dbReference type="PDB" id="4PUQ">
    <property type="method" value="X-ray"/>
    <property type="resolution" value="1.60 A"/>
    <property type="chains" value="A/B=118-370"/>
</dbReference>
<dbReference type="PDB" id="5HT2">
    <property type="method" value="X-ray"/>
    <property type="resolution" value="1.43 A"/>
    <property type="chains" value="A/B=118-370"/>
</dbReference>
<dbReference type="PDB" id="5INK">
    <property type="method" value="X-ray"/>
    <property type="resolution" value="2.15 A"/>
    <property type="chains" value="A/B=118-370"/>
</dbReference>
<dbReference type="PDB" id="5INL">
    <property type="method" value="X-ray"/>
    <property type="resolution" value="1.55 A"/>
    <property type="chains" value="A/B=118-370"/>
</dbReference>
<dbReference type="PDB" id="5INM">
    <property type="method" value="X-ray"/>
    <property type="resolution" value="2.40 A"/>
    <property type="chains" value="A/B/C/D/E=118-370"/>
</dbReference>
<dbReference type="PDB" id="5INN">
    <property type="method" value="X-ray"/>
    <property type="resolution" value="2.80 A"/>
    <property type="chains" value="A/B/C/D/E=118-370"/>
</dbReference>
<dbReference type="PDB" id="5INP">
    <property type="method" value="X-ray"/>
    <property type="resolution" value="1.95 A"/>
    <property type="chains" value="A/B=118-370"/>
</dbReference>
<dbReference type="PDB" id="5INQ">
    <property type="method" value="X-ray"/>
    <property type="resolution" value="1.85 A"/>
    <property type="chains" value="A/B=118-370"/>
</dbReference>
<dbReference type="PDB" id="5J3Z">
    <property type="method" value="X-ray"/>
    <property type="resolution" value="1.80 A"/>
    <property type="chains" value="A/B=118-370"/>
</dbReference>
<dbReference type="PDB" id="5J42">
    <property type="method" value="X-ray"/>
    <property type="resolution" value="1.70 A"/>
    <property type="chains" value="A/B=118-370"/>
</dbReference>
<dbReference type="PDB" id="5TVP">
    <property type="method" value="X-ray"/>
    <property type="resolution" value="2.40 A"/>
    <property type="chains" value="A/B/E/G/I/K/M/O=118-370"/>
</dbReference>
<dbReference type="PDB" id="5TVQ">
    <property type="method" value="X-ray"/>
    <property type="resolution" value="2.35 A"/>
    <property type="chains" value="A=118-370"/>
</dbReference>
<dbReference type="PDBsum" id="4GYZ"/>
<dbReference type="PDBsum" id="4GZ0"/>
<dbReference type="PDBsum" id="4GZ1"/>
<dbReference type="PDBsum" id="4GZ2"/>
<dbReference type="PDBsum" id="4PUQ"/>
<dbReference type="PDBsum" id="5HT2"/>
<dbReference type="PDBsum" id="5INK"/>
<dbReference type="PDBsum" id="5INL"/>
<dbReference type="PDBsum" id="5INM"/>
<dbReference type="PDBsum" id="5INN"/>
<dbReference type="PDBsum" id="5INP"/>
<dbReference type="PDBsum" id="5INQ"/>
<dbReference type="PDBsum" id="5J3Z"/>
<dbReference type="PDBsum" id="5J42"/>
<dbReference type="PDBsum" id="5TVP"/>
<dbReference type="PDBsum" id="5TVQ"/>
<dbReference type="SMR" id="Q9JJX7"/>
<dbReference type="BioGRID" id="207835">
    <property type="interactions" value="2"/>
</dbReference>
<dbReference type="FunCoup" id="Q9JJX7">
    <property type="interactions" value="2802"/>
</dbReference>
<dbReference type="STRING" id="10090.ENSMUSP00000035660"/>
<dbReference type="BindingDB" id="Q9JJX7"/>
<dbReference type="ChEMBL" id="CHEMBL3813588"/>
<dbReference type="iPTMnet" id="Q9JJX7"/>
<dbReference type="PhosphoSitePlus" id="Q9JJX7"/>
<dbReference type="SwissPalm" id="Q9JJX7"/>
<dbReference type="PaxDb" id="10090-ENSMUSP00000035660"/>
<dbReference type="PeptideAtlas" id="Q9JJX7"/>
<dbReference type="ProteomicsDB" id="298400"/>
<dbReference type="Pumba" id="Q9JJX7"/>
<dbReference type="Antibodypedia" id="10651">
    <property type="antibodies" value="322 antibodies from 33 providers"/>
</dbReference>
<dbReference type="DNASU" id="56196"/>
<dbReference type="Ensembl" id="ENSMUST00000038039.3">
    <property type="protein sequence ID" value="ENSMUSP00000035660.3"/>
    <property type="gene ID" value="ENSMUSG00000035958.4"/>
</dbReference>
<dbReference type="GeneID" id="56196"/>
<dbReference type="KEGG" id="mmu:56196"/>
<dbReference type="UCSC" id="uc007pwl.2">
    <property type="organism name" value="mouse"/>
</dbReference>
<dbReference type="AGR" id="MGI:1860486"/>
<dbReference type="CTD" id="51567"/>
<dbReference type="MGI" id="MGI:1860486">
    <property type="gene designation" value="Tdp2"/>
</dbReference>
<dbReference type="VEuPathDB" id="HostDB:ENSMUSG00000035958"/>
<dbReference type="eggNOG" id="KOG2756">
    <property type="taxonomic scope" value="Eukaryota"/>
</dbReference>
<dbReference type="GeneTree" id="ENSGT00390000014242"/>
<dbReference type="HOGENOM" id="CLU_047318_0_0_1"/>
<dbReference type="InParanoid" id="Q9JJX7"/>
<dbReference type="OMA" id="HRFDRIF"/>
<dbReference type="OrthoDB" id="9975959at2759"/>
<dbReference type="PhylomeDB" id="Q9JJX7"/>
<dbReference type="TreeFam" id="TF314813"/>
<dbReference type="Reactome" id="R-MMU-5693571">
    <property type="pathway name" value="Nonhomologous End-Joining (NHEJ)"/>
</dbReference>
<dbReference type="BioGRID-ORCS" id="56196">
    <property type="hits" value="6 hits in 113 CRISPR screens"/>
</dbReference>
<dbReference type="ChiTaRS" id="Tdp2">
    <property type="organism name" value="mouse"/>
</dbReference>
<dbReference type="EvolutionaryTrace" id="Q9JJX7"/>
<dbReference type="PRO" id="PR:Q9JJX7"/>
<dbReference type="Proteomes" id="UP000000589">
    <property type="component" value="Chromosome 13"/>
</dbReference>
<dbReference type="RNAct" id="Q9JJX7">
    <property type="molecule type" value="protein"/>
</dbReference>
<dbReference type="Bgee" id="ENSMUSG00000035958">
    <property type="expression patterns" value="Expressed in otic placode and 264 other cell types or tissues"/>
</dbReference>
<dbReference type="ExpressionAtlas" id="Q9JJX7">
    <property type="expression patterns" value="baseline and differential"/>
</dbReference>
<dbReference type="GO" id="GO:0016235">
    <property type="term" value="C:aggresome"/>
    <property type="evidence" value="ECO:0007669"/>
    <property type="project" value="Ensembl"/>
</dbReference>
<dbReference type="GO" id="GO:0005737">
    <property type="term" value="C:cytoplasm"/>
    <property type="evidence" value="ECO:0007669"/>
    <property type="project" value="UniProtKB-SubCell"/>
</dbReference>
<dbReference type="GO" id="GO:0005730">
    <property type="term" value="C:nucleolus"/>
    <property type="evidence" value="ECO:0007669"/>
    <property type="project" value="UniProtKB-SubCell"/>
</dbReference>
<dbReference type="GO" id="GO:0016605">
    <property type="term" value="C:PML body"/>
    <property type="evidence" value="ECO:0000250"/>
    <property type="project" value="UniProtKB"/>
</dbReference>
<dbReference type="GO" id="GO:0070260">
    <property type="term" value="F:5'-tyrosyl-DNA phosphodiesterase activity"/>
    <property type="evidence" value="ECO:0000250"/>
    <property type="project" value="UniProtKB"/>
</dbReference>
<dbReference type="GO" id="GO:0004519">
    <property type="term" value="F:endonuclease activity"/>
    <property type="evidence" value="ECO:0000247"/>
    <property type="project" value="MGI"/>
</dbReference>
<dbReference type="GO" id="GO:0000287">
    <property type="term" value="F:magnesium ion binding"/>
    <property type="evidence" value="ECO:0000250"/>
    <property type="project" value="UniProtKB"/>
</dbReference>
<dbReference type="GO" id="GO:0030145">
    <property type="term" value="F:manganese ion binding"/>
    <property type="evidence" value="ECO:0000250"/>
    <property type="project" value="UniProtKB"/>
</dbReference>
<dbReference type="GO" id="GO:0008081">
    <property type="term" value="F:phosphoric diester hydrolase activity"/>
    <property type="evidence" value="ECO:0000247"/>
    <property type="project" value="MGI"/>
</dbReference>
<dbReference type="GO" id="GO:0003697">
    <property type="term" value="F:single-stranded DNA binding"/>
    <property type="evidence" value="ECO:0000250"/>
    <property type="project" value="UniProtKB"/>
</dbReference>
<dbReference type="GO" id="GO:0036317">
    <property type="term" value="F:tyrosyl-RNA phosphodiesterase activity"/>
    <property type="evidence" value="ECO:0007669"/>
    <property type="project" value="Ensembl"/>
</dbReference>
<dbReference type="GO" id="GO:0006302">
    <property type="term" value="P:double-strand break repair"/>
    <property type="evidence" value="ECO:0000250"/>
    <property type="project" value="UniProtKB"/>
</dbReference>
<dbReference type="GO" id="GO:0048666">
    <property type="term" value="P:neuron development"/>
    <property type="evidence" value="ECO:0000250"/>
    <property type="project" value="UniProtKB"/>
</dbReference>
<dbReference type="CDD" id="cd09080">
    <property type="entry name" value="TDP2"/>
    <property type="match status" value="1"/>
</dbReference>
<dbReference type="FunFam" id="3.60.10.10:FF:000024">
    <property type="entry name" value="Tyrosyl-DNA phosphodiesterase 2"/>
    <property type="match status" value="1"/>
</dbReference>
<dbReference type="Gene3D" id="1.10.8.10">
    <property type="entry name" value="DNA helicase RuvA subunit, C-terminal domain"/>
    <property type="match status" value="1"/>
</dbReference>
<dbReference type="Gene3D" id="3.60.10.10">
    <property type="entry name" value="Endonuclease/exonuclease/phosphatase"/>
    <property type="match status" value="1"/>
</dbReference>
<dbReference type="InterPro" id="IPR036691">
    <property type="entry name" value="Endo/exonu/phosph_ase_sf"/>
</dbReference>
<dbReference type="InterPro" id="IPR005135">
    <property type="entry name" value="Endo/exonuclease/phosphatase"/>
</dbReference>
<dbReference type="InterPro" id="IPR051547">
    <property type="entry name" value="TDP2-like"/>
</dbReference>
<dbReference type="PANTHER" id="PTHR15822">
    <property type="entry name" value="TRAF AND TNF RECEPTOR-ASSOCIATED PROTEIN"/>
    <property type="match status" value="1"/>
</dbReference>
<dbReference type="PANTHER" id="PTHR15822:SF4">
    <property type="entry name" value="TYROSYL-DNA PHOSPHODIESTERASE 2"/>
    <property type="match status" value="1"/>
</dbReference>
<dbReference type="Pfam" id="PF03372">
    <property type="entry name" value="Exo_endo_phos"/>
    <property type="match status" value="1"/>
</dbReference>
<dbReference type="SUPFAM" id="SSF56219">
    <property type="entry name" value="DNase I-like"/>
    <property type="match status" value="1"/>
</dbReference>
<gene>
    <name type="primary">Tdp2</name>
    <name type="synonym">Ttrap</name>
</gene>
<sequence>MASGSSSDAAEPAGPAGRAASAPEAAQAEEDRVKRRRLQCLGFALVGGCDPTMVPSVLRENDWQTQKALSAYFELPENDQGWPRQPPTSFKSEAYVDLTNEDANDTTILEASPSGTPLEDSSTISFITWNIDGLDGCNLPERARGVCSCLALYSPDVVFLQEVIPPYCAYLKKRAASYTIITGNEEGYFTAILLKKGRVKFKSQEIIPFPNTKMMRNLLCVNVSLGGNEFCLMTSHLESTREHSAERIRQLKTVLGKMQEAPDSTTVIFAGDTNLRDQEVIKCGGLPDNVFDAWEFLGKPKHCQYTWDTKANNNLRIPAAYKHRFDRIFFRAEEGHLIPQSLDLVGLEKLDCGRFPSDHWGLLCTLNVVL</sequence>